<organism>
    <name type="scientific">Kluyveromyces lactis (strain ATCC 8585 / CBS 2359 / DSM 70799 / NBRC 1267 / NRRL Y-1140 / WM37)</name>
    <name type="common">Yeast</name>
    <name type="synonym">Candida sphaerica</name>
    <dbReference type="NCBI Taxonomy" id="284590"/>
    <lineage>
        <taxon>Eukaryota</taxon>
        <taxon>Fungi</taxon>
        <taxon>Dikarya</taxon>
        <taxon>Ascomycota</taxon>
        <taxon>Saccharomycotina</taxon>
        <taxon>Saccharomycetes</taxon>
        <taxon>Saccharomycetales</taxon>
        <taxon>Saccharomycetaceae</taxon>
        <taxon>Kluyveromyces</taxon>
    </lineage>
</organism>
<comment type="function">
    <text evidence="1">Vacuolar effluxer which mediate the efflux of amino acids resulting from autophagic degradation. The release of autophagic amino acids allows the maintenance of protein synthesis and viability during nitrogen starvation (By similarity).</text>
</comment>
<comment type="subcellular location">
    <subcellularLocation>
        <location evidence="1">Vacuole membrane</location>
        <topology evidence="1">Multi-pass membrane protein</topology>
    </subcellularLocation>
    <text evidence="1">Vacuole and punctate structures.</text>
</comment>
<comment type="similarity">
    <text evidence="3">Belongs to the ATG22 family.</text>
</comment>
<keyword id="KW-0029">Amino-acid transport</keyword>
<keyword id="KW-0072">Autophagy</keyword>
<keyword id="KW-0325">Glycoprotein</keyword>
<keyword id="KW-0472">Membrane</keyword>
<keyword id="KW-1185">Reference proteome</keyword>
<keyword id="KW-0812">Transmembrane</keyword>
<keyword id="KW-1133">Transmembrane helix</keyword>
<keyword id="KW-0813">Transport</keyword>
<keyword id="KW-0926">Vacuole</keyword>
<sequence length="492" mass="55407">MSYEAVPAENSAFIPDQAKRNIKGWYFYCFSSEPFIVSAVSTYVPLLLEQFGRINGVKLDDHSLRCEVNDDKCVLPMFNGRWFIDTSSFALYTFSLSVLFQTLLVISVSGIVDKCQSIAFKKRVLLFFGTVGALATWFIGTLRSDQYYVLPLLAIVGNCSYGVINVVGNSLLPVFVGFLVGNEDQLEVDIKTSIISGRGASYGYFSALIVQLFSILLVKQSKNHDNLQIAILFVGLWWLLWQIPIAFLLQDIPRDTDQEQHEFTWANTGNYMEYGWNSLWESLKHARLLKDVVIFLIGWFIISDSLTTINSTAILFAKTELKMTAINLITLSIITMVMAMLGAVYIPHLLSERLRLPLQQVLIIIIIWSSVIPLYGMTGFVFQNIGLKHKFEMYILGVWYGVSLGGLAAVSRSLFSLLVPRGKESTFFSLFSVTDKGSSILGPLLIGLITDKTHNIRYAFYLLFLFLVVSLPVFHGLDVERGKREARQLSTM</sequence>
<evidence type="ECO:0000250" key="1"/>
<evidence type="ECO:0000255" key="2"/>
<evidence type="ECO:0000305" key="3"/>
<protein>
    <recommendedName>
        <fullName>Autophagy-related protein 22</fullName>
    </recommendedName>
</protein>
<proteinExistence type="inferred from homology"/>
<reference key="1">
    <citation type="journal article" date="2004" name="Nature">
        <title>Genome evolution in yeasts.</title>
        <authorList>
            <person name="Dujon B."/>
            <person name="Sherman D."/>
            <person name="Fischer G."/>
            <person name="Durrens P."/>
            <person name="Casaregola S."/>
            <person name="Lafontaine I."/>
            <person name="de Montigny J."/>
            <person name="Marck C."/>
            <person name="Neuveglise C."/>
            <person name="Talla E."/>
            <person name="Goffard N."/>
            <person name="Frangeul L."/>
            <person name="Aigle M."/>
            <person name="Anthouard V."/>
            <person name="Babour A."/>
            <person name="Barbe V."/>
            <person name="Barnay S."/>
            <person name="Blanchin S."/>
            <person name="Beckerich J.-M."/>
            <person name="Beyne E."/>
            <person name="Bleykasten C."/>
            <person name="Boisrame A."/>
            <person name="Boyer J."/>
            <person name="Cattolico L."/>
            <person name="Confanioleri F."/>
            <person name="de Daruvar A."/>
            <person name="Despons L."/>
            <person name="Fabre E."/>
            <person name="Fairhead C."/>
            <person name="Ferry-Dumazet H."/>
            <person name="Groppi A."/>
            <person name="Hantraye F."/>
            <person name="Hennequin C."/>
            <person name="Jauniaux N."/>
            <person name="Joyet P."/>
            <person name="Kachouri R."/>
            <person name="Kerrest A."/>
            <person name="Koszul R."/>
            <person name="Lemaire M."/>
            <person name="Lesur I."/>
            <person name="Ma L."/>
            <person name="Muller H."/>
            <person name="Nicaud J.-M."/>
            <person name="Nikolski M."/>
            <person name="Oztas S."/>
            <person name="Ozier-Kalogeropoulos O."/>
            <person name="Pellenz S."/>
            <person name="Potier S."/>
            <person name="Richard G.-F."/>
            <person name="Straub M.-L."/>
            <person name="Suleau A."/>
            <person name="Swennen D."/>
            <person name="Tekaia F."/>
            <person name="Wesolowski-Louvel M."/>
            <person name="Westhof E."/>
            <person name="Wirth B."/>
            <person name="Zeniou-Meyer M."/>
            <person name="Zivanovic Y."/>
            <person name="Bolotin-Fukuhara M."/>
            <person name="Thierry A."/>
            <person name="Bouchier C."/>
            <person name="Caudron B."/>
            <person name="Scarpelli C."/>
            <person name="Gaillardin C."/>
            <person name="Weissenbach J."/>
            <person name="Wincker P."/>
            <person name="Souciet J.-L."/>
        </authorList>
    </citation>
    <scope>NUCLEOTIDE SEQUENCE [LARGE SCALE GENOMIC DNA]</scope>
    <source>
        <strain>ATCC 8585 / CBS 2359 / DSM 70799 / NBRC 1267 / NRRL Y-1140 / WM37</strain>
    </source>
</reference>
<gene>
    <name type="primary">ATG22</name>
    <name type="ordered locus">KLLA0C01188g</name>
</gene>
<feature type="chain" id="PRO_0000207624" description="Autophagy-related protein 22">
    <location>
        <begin position="1"/>
        <end position="492"/>
    </location>
</feature>
<feature type="transmembrane region" description="Helical" evidence="2">
    <location>
        <begin position="27"/>
        <end position="47"/>
    </location>
</feature>
<feature type="transmembrane region" description="Helical" evidence="2">
    <location>
        <begin position="92"/>
        <end position="112"/>
    </location>
</feature>
<feature type="transmembrane region" description="Helical" evidence="2">
    <location>
        <begin position="124"/>
        <end position="144"/>
    </location>
</feature>
<feature type="transmembrane region" description="Helical" evidence="2">
    <location>
        <begin position="161"/>
        <end position="181"/>
    </location>
</feature>
<feature type="transmembrane region" description="Helical" evidence="2">
    <location>
        <begin position="199"/>
        <end position="219"/>
    </location>
</feature>
<feature type="transmembrane region" description="Helical" evidence="2">
    <location>
        <begin position="229"/>
        <end position="249"/>
    </location>
</feature>
<feature type="transmembrane region" description="Helical" evidence="2">
    <location>
        <begin position="292"/>
        <end position="312"/>
    </location>
</feature>
<feature type="transmembrane region" description="Helical" evidence="2">
    <location>
        <begin position="326"/>
        <end position="346"/>
    </location>
</feature>
<feature type="transmembrane region" description="Helical" evidence="2">
    <location>
        <begin position="362"/>
        <end position="382"/>
    </location>
</feature>
<feature type="transmembrane region" description="Helical" evidence="2">
    <location>
        <begin position="391"/>
        <end position="411"/>
    </location>
</feature>
<feature type="transmembrane region" description="Helical" evidence="2">
    <location>
        <begin position="430"/>
        <end position="450"/>
    </location>
</feature>
<feature type="transmembrane region" description="Helical" evidence="2">
    <location>
        <begin position="459"/>
        <end position="479"/>
    </location>
</feature>
<feature type="glycosylation site" description="N-linked (GlcNAc...) asparagine" evidence="2">
    <location>
        <position position="158"/>
    </location>
</feature>
<accession>Q6CUZ1</accession>
<name>ATG22_KLULA</name>
<dbReference type="EMBL" id="CR382123">
    <property type="protein sequence ID" value="CAH01099.1"/>
    <property type="molecule type" value="Genomic_DNA"/>
</dbReference>
<dbReference type="RefSeq" id="XP_452248.1">
    <property type="nucleotide sequence ID" value="XM_452248.1"/>
</dbReference>
<dbReference type="FunCoup" id="Q6CUZ1">
    <property type="interactions" value="44"/>
</dbReference>
<dbReference type="STRING" id="284590.Q6CUZ1"/>
<dbReference type="GlyCosmos" id="Q6CUZ1">
    <property type="glycosylation" value="1 site, No reported glycans"/>
</dbReference>
<dbReference type="PaxDb" id="284590-Q6CUZ1"/>
<dbReference type="KEGG" id="kla:KLLA0_C01188g"/>
<dbReference type="eggNOG" id="ENOG502QR9I">
    <property type="taxonomic scope" value="Eukaryota"/>
</dbReference>
<dbReference type="HOGENOM" id="CLU_017518_1_0_1"/>
<dbReference type="InParanoid" id="Q6CUZ1"/>
<dbReference type="OMA" id="QPWEIFP"/>
<dbReference type="Proteomes" id="UP000000598">
    <property type="component" value="Chromosome C"/>
</dbReference>
<dbReference type="GO" id="GO:0005774">
    <property type="term" value="C:vacuolar membrane"/>
    <property type="evidence" value="ECO:0007669"/>
    <property type="project" value="UniProtKB-SubCell"/>
</dbReference>
<dbReference type="GO" id="GO:0022857">
    <property type="term" value="F:transmembrane transporter activity"/>
    <property type="evidence" value="ECO:0007669"/>
    <property type="project" value="InterPro"/>
</dbReference>
<dbReference type="GO" id="GO:0032974">
    <property type="term" value="P:amino acid transmembrane export from vacuole"/>
    <property type="evidence" value="ECO:0007669"/>
    <property type="project" value="InterPro"/>
</dbReference>
<dbReference type="GO" id="GO:0006914">
    <property type="term" value="P:autophagy"/>
    <property type="evidence" value="ECO:0007669"/>
    <property type="project" value="UniProtKB-KW"/>
</dbReference>
<dbReference type="CDD" id="cd17483">
    <property type="entry name" value="MFS_Atg22_like"/>
    <property type="match status" value="1"/>
</dbReference>
<dbReference type="Gene3D" id="1.20.1250.20">
    <property type="entry name" value="MFS general substrate transporter like domains"/>
    <property type="match status" value="1"/>
</dbReference>
<dbReference type="InterPro" id="IPR044738">
    <property type="entry name" value="Atg22"/>
</dbReference>
<dbReference type="InterPro" id="IPR024671">
    <property type="entry name" value="Atg22-like"/>
</dbReference>
<dbReference type="InterPro" id="IPR050495">
    <property type="entry name" value="ATG22/LtaA_families"/>
</dbReference>
<dbReference type="InterPro" id="IPR020846">
    <property type="entry name" value="MFS_dom"/>
</dbReference>
<dbReference type="InterPro" id="IPR036259">
    <property type="entry name" value="MFS_trans_sf"/>
</dbReference>
<dbReference type="PANTHER" id="PTHR23519">
    <property type="entry name" value="AUTOPHAGY-RELATED PROTEIN 22"/>
    <property type="match status" value="1"/>
</dbReference>
<dbReference type="PANTHER" id="PTHR23519:SF1">
    <property type="entry name" value="AUTOPHAGY-RELATED PROTEIN 22"/>
    <property type="match status" value="1"/>
</dbReference>
<dbReference type="Pfam" id="PF11700">
    <property type="entry name" value="ATG22"/>
    <property type="match status" value="1"/>
</dbReference>
<dbReference type="SUPFAM" id="SSF103473">
    <property type="entry name" value="MFS general substrate transporter"/>
    <property type="match status" value="1"/>
</dbReference>